<proteinExistence type="inferred from homology"/>
<protein>
    <recommendedName>
        <fullName evidence="1">Ribosome-binding factor A</fullName>
    </recommendedName>
</protein>
<gene>
    <name evidence="1" type="primary">rbfA</name>
    <name type="ordered locus">BG0828</name>
</gene>
<reference key="1">
    <citation type="journal article" date="2004" name="Nucleic Acids Res.">
        <title>Comparative analysis of the Borrelia garinii genome.</title>
        <authorList>
            <person name="Gloeckner G."/>
            <person name="Lehmann R."/>
            <person name="Romualdi A."/>
            <person name="Pradella S."/>
            <person name="Schulte-Spechtel U."/>
            <person name="Schilhabel M."/>
            <person name="Wilske B."/>
            <person name="Suehnel J."/>
            <person name="Platzer M."/>
        </authorList>
    </citation>
    <scope>NUCLEOTIDE SEQUENCE [LARGE SCALE GENOMIC DNA]</scope>
    <source>
        <strain>ATCC BAA-2496 / DSM 23469 / PBi</strain>
    </source>
</reference>
<organism>
    <name type="scientific">Borrelia garinii subsp. bavariensis (strain ATCC BAA-2496 / DSM 23469 / PBi)</name>
    <name type="common">Borreliella bavariensis</name>
    <dbReference type="NCBI Taxonomy" id="290434"/>
    <lineage>
        <taxon>Bacteria</taxon>
        <taxon>Pseudomonadati</taxon>
        <taxon>Spirochaetota</taxon>
        <taxon>Spirochaetia</taxon>
        <taxon>Spirochaetales</taxon>
        <taxon>Borreliaceae</taxon>
        <taxon>Borreliella</taxon>
    </lineage>
</organism>
<keyword id="KW-0963">Cytoplasm</keyword>
<keyword id="KW-0690">Ribosome biogenesis</keyword>
<feature type="chain" id="PRO_0000102628" description="Ribosome-binding factor A">
    <location>
        <begin position="1"/>
        <end position="120"/>
    </location>
</feature>
<accession>Q65ZX1</accession>
<dbReference type="EMBL" id="CP000013">
    <property type="protein sequence ID" value="AAU07650.1"/>
    <property type="molecule type" value="Genomic_DNA"/>
</dbReference>
<dbReference type="RefSeq" id="WP_011194095.1">
    <property type="nucleotide sequence ID" value="NZ_CP028872.1"/>
</dbReference>
<dbReference type="SMR" id="Q65ZX1"/>
<dbReference type="GeneID" id="45161602"/>
<dbReference type="KEGG" id="bga:BG0828"/>
<dbReference type="eggNOG" id="COG0858">
    <property type="taxonomic scope" value="Bacteria"/>
</dbReference>
<dbReference type="HOGENOM" id="CLU_089475_6_5_12"/>
<dbReference type="OrthoDB" id="370444at2"/>
<dbReference type="Proteomes" id="UP000002276">
    <property type="component" value="Chromosome"/>
</dbReference>
<dbReference type="GO" id="GO:0005829">
    <property type="term" value="C:cytosol"/>
    <property type="evidence" value="ECO:0007669"/>
    <property type="project" value="TreeGrafter"/>
</dbReference>
<dbReference type="GO" id="GO:0043024">
    <property type="term" value="F:ribosomal small subunit binding"/>
    <property type="evidence" value="ECO:0007669"/>
    <property type="project" value="TreeGrafter"/>
</dbReference>
<dbReference type="GO" id="GO:0030490">
    <property type="term" value="P:maturation of SSU-rRNA"/>
    <property type="evidence" value="ECO:0007669"/>
    <property type="project" value="UniProtKB-UniRule"/>
</dbReference>
<dbReference type="Gene3D" id="3.30.300.20">
    <property type="match status" value="1"/>
</dbReference>
<dbReference type="HAMAP" id="MF_00003">
    <property type="entry name" value="RbfA"/>
    <property type="match status" value="1"/>
</dbReference>
<dbReference type="InterPro" id="IPR015946">
    <property type="entry name" value="KH_dom-like_a/b"/>
</dbReference>
<dbReference type="InterPro" id="IPR000238">
    <property type="entry name" value="RbfA"/>
</dbReference>
<dbReference type="InterPro" id="IPR023799">
    <property type="entry name" value="RbfA_dom_sf"/>
</dbReference>
<dbReference type="InterPro" id="IPR020053">
    <property type="entry name" value="Ribosome-bd_factorA_CS"/>
</dbReference>
<dbReference type="NCBIfam" id="TIGR00082">
    <property type="entry name" value="rbfA"/>
    <property type="match status" value="1"/>
</dbReference>
<dbReference type="PANTHER" id="PTHR33515">
    <property type="entry name" value="RIBOSOME-BINDING FACTOR A, CHLOROPLASTIC-RELATED"/>
    <property type="match status" value="1"/>
</dbReference>
<dbReference type="PANTHER" id="PTHR33515:SF1">
    <property type="entry name" value="RIBOSOME-BINDING FACTOR A, CHLOROPLASTIC-RELATED"/>
    <property type="match status" value="1"/>
</dbReference>
<dbReference type="Pfam" id="PF02033">
    <property type="entry name" value="RBFA"/>
    <property type="match status" value="1"/>
</dbReference>
<dbReference type="SUPFAM" id="SSF89919">
    <property type="entry name" value="Ribosome-binding factor A, RbfA"/>
    <property type="match status" value="1"/>
</dbReference>
<dbReference type="PROSITE" id="PS01319">
    <property type="entry name" value="RBFA"/>
    <property type="match status" value="1"/>
</dbReference>
<evidence type="ECO:0000255" key="1">
    <source>
        <dbReference type="HAMAP-Rule" id="MF_00003"/>
    </source>
</evidence>
<sequence>MYKNIKKFKLESFIAQEIGNLIVSRGIKDPRIHSFLTVVKVEFSKDLINAKVFMGSIKEGASLDNAVKALNNAKGFIQSQIIKRIKVRSTPKLLFVKDDSLSKSFYVNKIIEGLNTTREN</sequence>
<comment type="function">
    <text evidence="1">One of several proteins that assist in the late maturation steps of the functional core of the 30S ribosomal subunit. Associates with free 30S ribosomal subunits (but not with 30S subunits that are part of 70S ribosomes or polysomes). Required for efficient processing of 16S rRNA. May interact with the 5'-terminal helix region of 16S rRNA.</text>
</comment>
<comment type="subunit">
    <text evidence="1">Monomer. Binds 30S ribosomal subunits, but not 50S ribosomal subunits or 70S ribosomes.</text>
</comment>
<comment type="subcellular location">
    <subcellularLocation>
        <location evidence="1">Cytoplasm</location>
    </subcellularLocation>
</comment>
<comment type="similarity">
    <text evidence="1">Belongs to the RbfA family.</text>
</comment>
<name>RBFA_BORGP</name>